<proteinExistence type="inferred from homology"/>
<evidence type="ECO:0000250" key="1"/>
<evidence type="ECO:0000255" key="2">
    <source>
        <dbReference type="PROSITE-ProRule" id="PRU01163"/>
    </source>
</evidence>
<evidence type="ECO:0000256" key="3">
    <source>
        <dbReference type="SAM" id="MobiDB-lite"/>
    </source>
</evidence>
<evidence type="ECO:0000305" key="4"/>
<gene>
    <name type="primary">mcpII</name>
</gene>
<protein>
    <recommendedName>
        <fullName>Metapyrocatechase 2</fullName>
        <shortName>MPC</shortName>
        <ecNumber>1.13.11.2</ecNumber>
    </recommendedName>
    <alternativeName>
        <fullName>CatO2ase</fullName>
    </alternativeName>
    <alternativeName>
        <fullName>Catechol 2,3-dioxygenase II</fullName>
    </alternativeName>
</protein>
<sequence length="320" mass="35387">MDTHRADASQRSQAPAARPRHAVHSIDHYALEVPDLAVAERFLDAFGLTVARTPECLEVYAADQRCWARFYEGERKRLAYLSFSCFEGDFAGIRQQLAASGATLVEDPRYGDESGVWFFDPDGNLVQVKIGPKTSPSSKSPARLEGAPGGQRGAVVRSQVQRVLPRRLSHVLLFTPSVQRALDFYRDALGLRLSDRSDDVIAFTHAPYGSDHHLLALVKSSARGWHHAAWDVADVNEVGQGASQMAKAGYTQGWGTGRHVLGSNYFFYVLDPWGSFCEYSADIDYIPAGQAWPAGDFAAEDSLYQWGPDVPEYFVRNTEA</sequence>
<name>MPC2_CUPNE</name>
<accession>P17296</accession>
<dbReference type="EC" id="1.13.11.2"/>
<dbReference type="EMBL" id="X52415">
    <property type="protein sequence ID" value="CAA36666.1"/>
    <property type="molecule type" value="Genomic_DNA"/>
</dbReference>
<dbReference type="PIR" id="S14691">
    <property type="entry name" value="DAAL2E"/>
</dbReference>
<dbReference type="RefSeq" id="WP_011300792.1">
    <property type="nucleotide sequence ID" value="NZ_CAIGKG010000001.1"/>
</dbReference>
<dbReference type="SMR" id="P17296"/>
<dbReference type="GO" id="GO:0018577">
    <property type="term" value="F:catechol 2,3-dioxygenase activity"/>
    <property type="evidence" value="ECO:0007669"/>
    <property type="project" value="UniProtKB-EC"/>
</dbReference>
<dbReference type="GO" id="GO:0008198">
    <property type="term" value="F:ferrous iron binding"/>
    <property type="evidence" value="ECO:0007669"/>
    <property type="project" value="InterPro"/>
</dbReference>
<dbReference type="GO" id="GO:0009056">
    <property type="term" value="P:catabolic process"/>
    <property type="evidence" value="ECO:0007669"/>
    <property type="project" value="UniProtKB-KW"/>
</dbReference>
<dbReference type="CDD" id="cd08360">
    <property type="entry name" value="MhqB_like_C"/>
    <property type="match status" value="1"/>
</dbReference>
<dbReference type="CDD" id="cd08344">
    <property type="entry name" value="MhqB_like_N"/>
    <property type="match status" value="1"/>
</dbReference>
<dbReference type="Gene3D" id="3.10.180.10">
    <property type="entry name" value="2,3-Dihydroxybiphenyl 1,2-Dioxygenase, domain 1"/>
    <property type="match status" value="2"/>
</dbReference>
<dbReference type="InterPro" id="IPR029068">
    <property type="entry name" value="Glyas_Bleomycin-R_OHBP_Dase"/>
</dbReference>
<dbReference type="InterPro" id="IPR004360">
    <property type="entry name" value="Glyas_Fos-R_dOase_dom"/>
</dbReference>
<dbReference type="InterPro" id="IPR050383">
    <property type="entry name" value="GlyoxalaseI/FosfomycinResist"/>
</dbReference>
<dbReference type="InterPro" id="IPR037523">
    <property type="entry name" value="VOC"/>
</dbReference>
<dbReference type="InterPro" id="IPR000486">
    <property type="entry name" value="Xdiol_ring_cleave_dOase_1/2"/>
</dbReference>
<dbReference type="PANTHER" id="PTHR21366:SF14">
    <property type="entry name" value="GLYOXALASE DOMAIN-CONTAINING PROTEIN 5"/>
    <property type="match status" value="1"/>
</dbReference>
<dbReference type="PANTHER" id="PTHR21366">
    <property type="entry name" value="GLYOXALASE FAMILY PROTEIN"/>
    <property type="match status" value="1"/>
</dbReference>
<dbReference type="Pfam" id="PF00903">
    <property type="entry name" value="Glyoxalase"/>
    <property type="match status" value="1"/>
</dbReference>
<dbReference type="SUPFAM" id="SSF54593">
    <property type="entry name" value="Glyoxalase/Bleomycin resistance protein/Dihydroxybiphenyl dioxygenase"/>
    <property type="match status" value="1"/>
</dbReference>
<dbReference type="PROSITE" id="PS00082">
    <property type="entry name" value="EXTRADIOL_DIOXYGENAS"/>
    <property type="match status" value="1"/>
</dbReference>
<dbReference type="PROSITE" id="PS51819">
    <property type="entry name" value="VOC"/>
    <property type="match status" value="2"/>
</dbReference>
<keyword id="KW-0058">Aromatic hydrocarbons catabolism</keyword>
<keyword id="KW-0223">Dioxygenase</keyword>
<keyword id="KW-0408">Iron</keyword>
<keyword id="KW-0479">Metal-binding</keyword>
<keyword id="KW-0560">Oxidoreductase</keyword>
<keyword id="KW-0677">Repeat</keyword>
<comment type="catalytic activity">
    <reaction>
        <text>catechol + O2 = (2Z,4E)-2-hydroxy-6-oxohexa-2,4-dienoate + H(+)</text>
        <dbReference type="Rhea" id="RHEA:17337"/>
        <dbReference type="ChEBI" id="CHEBI:15378"/>
        <dbReference type="ChEBI" id="CHEBI:15379"/>
        <dbReference type="ChEBI" id="CHEBI:18135"/>
        <dbReference type="ChEBI" id="CHEBI:71198"/>
        <dbReference type="EC" id="1.13.11.2"/>
    </reaction>
</comment>
<comment type="cofactor">
    <cofactor>
        <name>Fe(2+)</name>
        <dbReference type="ChEBI" id="CHEBI:29033"/>
    </cofactor>
</comment>
<comment type="similarity">
    <text evidence="4">Belongs to the extradiol ring-cleavage dioxygenase family.</text>
</comment>
<organism>
    <name type="scientific">Cupriavidus necator</name>
    <name type="common">Alcaligenes eutrophus</name>
    <name type="synonym">Ralstonia eutropha</name>
    <dbReference type="NCBI Taxonomy" id="106590"/>
    <lineage>
        <taxon>Bacteria</taxon>
        <taxon>Pseudomonadati</taxon>
        <taxon>Pseudomonadota</taxon>
        <taxon>Betaproteobacteria</taxon>
        <taxon>Burkholderiales</taxon>
        <taxon>Burkholderiaceae</taxon>
        <taxon>Cupriavidus</taxon>
    </lineage>
</organism>
<reference key="1">
    <citation type="journal article" date="1990" name="Nucleic Acids Res.">
        <title>Nucleotide sequence of the metapyrocatechase II (catechol 2,3-oxygenase II) gene mpcII from Alcaligenes eutrophus JMP 222.</title>
        <authorList>
            <person name="Kabisch M."/>
            <person name="Fortnagel P."/>
        </authorList>
    </citation>
    <scope>NUCLEOTIDE SEQUENCE [GENOMIC DNA]</scope>
    <source>
        <strain>JMP222</strain>
    </source>
</reference>
<feature type="chain" id="PRO_0000085030" description="Metapyrocatechase 2">
    <location>
        <begin position="1"/>
        <end position="320"/>
    </location>
</feature>
<feature type="domain" description="VOC 1" evidence="2">
    <location>
        <begin position="25"/>
        <end position="131"/>
    </location>
</feature>
<feature type="domain" description="VOC 2" evidence="2">
    <location>
        <begin position="167"/>
        <end position="282"/>
    </location>
</feature>
<feature type="region of interest" description="Disordered" evidence="3">
    <location>
        <begin position="1"/>
        <end position="21"/>
    </location>
</feature>
<feature type="region of interest" description="Disordered" evidence="3">
    <location>
        <begin position="131"/>
        <end position="153"/>
    </location>
</feature>
<feature type="binding site" evidence="1">
    <location>
        <position position="170"/>
    </location>
    <ligand>
        <name>Fe cation</name>
        <dbReference type="ChEBI" id="CHEBI:24875"/>
    </ligand>
</feature>
<feature type="binding site" evidence="1">
    <location>
        <position position="227"/>
    </location>
    <ligand>
        <name>Fe cation</name>
        <dbReference type="ChEBI" id="CHEBI:24875"/>
    </ligand>
</feature>
<feature type="binding site" evidence="1">
    <location>
        <position position="278"/>
    </location>
    <ligand>
        <name>Fe cation</name>
        <dbReference type="ChEBI" id="CHEBI:24875"/>
    </ligand>
</feature>